<organism>
    <name type="scientific">Chlorobium luteolum (strain DSM 273 / BCRC 81028 / 2530)</name>
    <name type="common">Pelodictyon luteolum</name>
    <dbReference type="NCBI Taxonomy" id="319225"/>
    <lineage>
        <taxon>Bacteria</taxon>
        <taxon>Pseudomonadati</taxon>
        <taxon>Chlorobiota</taxon>
        <taxon>Chlorobiia</taxon>
        <taxon>Chlorobiales</taxon>
        <taxon>Chlorobiaceae</taxon>
        <taxon>Chlorobium/Pelodictyon group</taxon>
        <taxon>Pelodictyon</taxon>
    </lineage>
</organism>
<accession>Q3B4Y9</accession>
<feature type="chain" id="PRO_0000344920" description="Ribonuclease Y">
    <location>
        <begin position="1"/>
        <end position="524"/>
    </location>
</feature>
<feature type="transmembrane region" description="Helical" evidence="1">
    <location>
        <begin position="3"/>
        <end position="23"/>
    </location>
</feature>
<feature type="domain" description="KH" evidence="1">
    <location>
        <begin position="214"/>
        <end position="274"/>
    </location>
</feature>
<feature type="domain" description="HD" evidence="2">
    <location>
        <begin position="340"/>
        <end position="432"/>
    </location>
</feature>
<protein>
    <recommendedName>
        <fullName evidence="1">Ribonuclease Y</fullName>
        <shortName evidence="1">RNase Y</shortName>
        <ecNumber evidence="1">3.1.-.-</ecNumber>
    </recommendedName>
</protein>
<proteinExistence type="inferred from homology"/>
<name>RNY_CHLL3</name>
<sequence>MGIVINLFLIIFASVVFFAAGFFLGRFFLERLGTTKVLEAEERAVQIVQEAQKEANEYKELKVTEVNQEWKKKRREFDQEVVIKNNKFNQLQKQVQQREAQLKKQLQDVRDTERKLQDQQKELDQAMETVGIRATELERIITEQNQRLESISNLQADEARQMLVDNMITKAREEATETIHKIHEEAEENAGRLAEKTLLTAIQRISFEQATENALSVVHIQSDELKGRIIGREGRNIKAFENATGVDIIVDDTPEVVILSCFDPLRREHAKLTLKKLLADGVIHPVAIEKAYLDAGKEMADVIMSAGEEALASLQIPDMPAEIVRLIGTMKFHSVYGQNLLQHSREVAMLAGIMATELKLDPRLAKRAGLLHDIGLVLPDTDQPHALAASEFLRKFKESAVVLNAIAAHHGEAEKESPIAELVDAANVISLARPGARGAVTADGNVKRLESLEEIAKGFPGVLKTYALQAGREIRVIVEGDNVSDSQADVLAHDIAHKIESEAQYPGQIKVSIVRERRSVAYAK</sequence>
<comment type="function">
    <text evidence="1">Endoribonuclease that initiates mRNA decay.</text>
</comment>
<comment type="subcellular location">
    <subcellularLocation>
        <location evidence="1">Cell membrane</location>
        <topology evidence="1">Single-pass membrane protein</topology>
    </subcellularLocation>
</comment>
<comment type="similarity">
    <text evidence="1">Belongs to the RNase Y family.</text>
</comment>
<evidence type="ECO:0000255" key="1">
    <source>
        <dbReference type="HAMAP-Rule" id="MF_00335"/>
    </source>
</evidence>
<evidence type="ECO:0000255" key="2">
    <source>
        <dbReference type="PROSITE-ProRule" id="PRU01175"/>
    </source>
</evidence>
<keyword id="KW-1003">Cell membrane</keyword>
<keyword id="KW-0255">Endonuclease</keyword>
<keyword id="KW-0378">Hydrolase</keyword>
<keyword id="KW-0472">Membrane</keyword>
<keyword id="KW-0540">Nuclease</keyword>
<keyword id="KW-1185">Reference proteome</keyword>
<keyword id="KW-0694">RNA-binding</keyword>
<keyword id="KW-0812">Transmembrane</keyword>
<keyword id="KW-1133">Transmembrane helix</keyword>
<reference key="1">
    <citation type="submission" date="2005-08" db="EMBL/GenBank/DDBJ databases">
        <title>Complete sequence of Pelodictyon luteolum DSM 273.</title>
        <authorList>
            <consortium name="US DOE Joint Genome Institute"/>
            <person name="Copeland A."/>
            <person name="Lucas S."/>
            <person name="Lapidus A."/>
            <person name="Barry K."/>
            <person name="Detter J.C."/>
            <person name="Glavina T."/>
            <person name="Hammon N."/>
            <person name="Israni S."/>
            <person name="Pitluck S."/>
            <person name="Bryant D."/>
            <person name="Schmutz J."/>
            <person name="Larimer F."/>
            <person name="Land M."/>
            <person name="Kyrpides N."/>
            <person name="Ivanova N."/>
            <person name="Richardson P."/>
        </authorList>
    </citation>
    <scope>NUCLEOTIDE SEQUENCE [LARGE SCALE GENOMIC DNA]</scope>
    <source>
        <strain>DSM 273 / BCRC 81028 / 2530</strain>
    </source>
</reference>
<dbReference type="EC" id="3.1.-.-" evidence="1"/>
<dbReference type="EMBL" id="CP000096">
    <property type="protein sequence ID" value="ABB23592.1"/>
    <property type="molecule type" value="Genomic_DNA"/>
</dbReference>
<dbReference type="RefSeq" id="WP_011357466.1">
    <property type="nucleotide sequence ID" value="NC_007512.1"/>
</dbReference>
<dbReference type="SMR" id="Q3B4Y9"/>
<dbReference type="STRING" id="319225.Plut_0714"/>
<dbReference type="KEGG" id="plt:Plut_0714"/>
<dbReference type="eggNOG" id="COG1418">
    <property type="taxonomic scope" value="Bacteria"/>
</dbReference>
<dbReference type="HOGENOM" id="CLU_028328_1_0_10"/>
<dbReference type="OrthoDB" id="9803205at2"/>
<dbReference type="Proteomes" id="UP000002709">
    <property type="component" value="Chromosome"/>
</dbReference>
<dbReference type="GO" id="GO:0005886">
    <property type="term" value="C:plasma membrane"/>
    <property type="evidence" value="ECO:0007669"/>
    <property type="project" value="UniProtKB-SubCell"/>
</dbReference>
<dbReference type="GO" id="GO:0003723">
    <property type="term" value="F:RNA binding"/>
    <property type="evidence" value="ECO:0007669"/>
    <property type="project" value="UniProtKB-UniRule"/>
</dbReference>
<dbReference type="GO" id="GO:0004521">
    <property type="term" value="F:RNA endonuclease activity"/>
    <property type="evidence" value="ECO:0007669"/>
    <property type="project" value="UniProtKB-UniRule"/>
</dbReference>
<dbReference type="GO" id="GO:0006402">
    <property type="term" value="P:mRNA catabolic process"/>
    <property type="evidence" value="ECO:0007669"/>
    <property type="project" value="UniProtKB-UniRule"/>
</dbReference>
<dbReference type="CDD" id="cd00077">
    <property type="entry name" value="HDc"/>
    <property type="match status" value="1"/>
</dbReference>
<dbReference type="CDD" id="cd22431">
    <property type="entry name" value="KH-I_RNaseY"/>
    <property type="match status" value="1"/>
</dbReference>
<dbReference type="Gene3D" id="1.10.3210.10">
    <property type="entry name" value="Hypothetical protein af1432"/>
    <property type="match status" value="1"/>
</dbReference>
<dbReference type="Gene3D" id="3.30.1370.10">
    <property type="entry name" value="K Homology domain, type 1"/>
    <property type="match status" value="1"/>
</dbReference>
<dbReference type="HAMAP" id="MF_00335">
    <property type="entry name" value="RNase_Y"/>
    <property type="match status" value="1"/>
</dbReference>
<dbReference type="InterPro" id="IPR003607">
    <property type="entry name" value="HD/PDEase_dom"/>
</dbReference>
<dbReference type="InterPro" id="IPR006674">
    <property type="entry name" value="HD_domain"/>
</dbReference>
<dbReference type="InterPro" id="IPR006675">
    <property type="entry name" value="HDIG_dom"/>
</dbReference>
<dbReference type="InterPro" id="IPR004087">
    <property type="entry name" value="KH_dom"/>
</dbReference>
<dbReference type="InterPro" id="IPR004088">
    <property type="entry name" value="KH_dom_type_1"/>
</dbReference>
<dbReference type="InterPro" id="IPR036612">
    <property type="entry name" value="KH_dom_type_1_sf"/>
</dbReference>
<dbReference type="InterPro" id="IPR017705">
    <property type="entry name" value="Ribonuclease_Y"/>
</dbReference>
<dbReference type="InterPro" id="IPR022711">
    <property type="entry name" value="RNase_Y_N"/>
</dbReference>
<dbReference type="NCBIfam" id="TIGR00277">
    <property type="entry name" value="HDIG"/>
    <property type="match status" value="1"/>
</dbReference>
<dbReference type="NCBIfam" id="TIGR03319">
    <property type="entry name" value="RNase_Y"/>
    <property type="match status" value="1"/>
</dbReference>
<dbReference type="PANTHER" id="PTHR12826">
    <property type="entry name" value="RIBONUCLEASE Y"/>
    <property type="match status" value="1"/>
</dbReference>
<dbReference type="PANTHER" id="PTHR12826:SF15">
    <property type="entry name" value="RIBONUCLEASE Y"/>
    <property type="match status" value="1"/>
</dbReference>
<dbReference type="Pfam" id="PF01966">
    <property type="entry name" value="HD"/>
    <property type="match status" value="1"/>
</dbReference>
<dbReference type="Pfam" id="PF00013">
    <property type="entry name" value="KH_1"/>
    <property type="match status" value="1"/>
</dbReference>
<dbReference type="Pfam" id="PF12072">
    <property type="entry name" value="RNase_Y_N"/>
    <property type="match status" value="1"/>
</dbReference>
<dbReference type="SMART" id="SM00471">
    <property type="entry name" value="HDc"/>
    <property type="match status" value="1"/>
</dbReference>
<dbReference type="SMART" id="SM00322">
    <property type="entry name" value="KH"/>
    <property type="match status" value="1"/>
</dbReference>
<dbReference type="SUPFAM" id="SSF54791">
    <property type="entry name" value="Eukaryotic type KH-domain (KH-domain type I)"/>
    <property type="match status" value="1"/>
</dbReference>
<dbReference type="SUPFAM" id="SSF109604">
    <property type="entry name" value="HD-domain/PDEase-like"/>
    <property type="match status" value="1"/>
</dbReference>
<dbReference type="PROSITE" id="PS51831">
    <property type="entry name" value="HD"/>
    <property type="match status" value="1"/>
</dbReference>
<dbReference type="PROSITE" id="PS50084">
    <property type="entry name" value="KH_TYPE_1"/>
    <property type="match status" value="1"/>
</dbReference>
<gene>
    <name evidence="1" type="primary">rny</name>
    <name type="ordered locus">Plut_0714</name>
</gene>